<organism>
    <name type="scientific">Yersinia pseudotuberculosis serotype O:3 (strain YPIII)</name>
    <dbReference type="NCBI Taxonomy" id="502800"/>
    <lineage>
        <taxon>Bacteria</taxon>
        <taxon>Pseudomonadati</taxon>
        <taxon>Pseudomonadota</taxon>
        <taxon>Gammaproteobacteria</taxon>
        <taxon>Enterobacterales</taxon>
        <taxon>Yersiniaceae</taxon>
        <taxon>Yersinia</taxon>
    </lineage>
</organism>
<gene>
    <name evidence="1" type="primary">flhD</name>
    <name type="ordered locus">YPK_1745</name>
</gene>
<name>FLHD_YERPY</name>
<evidence type="ECO:0000255" key="1">
    <source>
        <dbReference type="HAMAP-Rule" id="MF_00725"/>
    </source>
</evidence>
<proteinExistence type="inferred from homology"/>
<reference key="1">
    <citation type="submission" date="2008-02" db="EMBL/GenBank/DDBJ databases">
        <title>Complete sequence of Yersinia pseudotuberculosis YPIII.</title>
        <authorList>
            <consortium name="US DOE Joint Genome Institute"/>
            <person name="Copeland A."/>
            <person name="Lucas S."/>
            <person name="Lapidus A."/>
            <person name="Glavina del Rio T."/>
            <person name="Dalin E."/>
            <person name="Tice H."/>
            <person name="Bruce D."/>
            <person name="Goodwin L."/>
            <person name="Pitluck S."/>
            <person name="Munk A.C."/>
            <person name="Brettin T."/>
            <person name="Detter J.C."/>
            <person name="Han C."/>
            <person name="Tapia R."/>
            <person name="Schmutz J."/>
            <person name="Larimer F."/>
            <person name="Land M."/>
            <person name="Hauser L."/>
            <person name="Challacombe J.F."/>
            <person name="Green L."/>
            <person name="Lindler L.E."/>
            <person name="Nikolich M.P."/>
            <person name="Richardson P."/>
        </authorList>
    </citation>
    <scope>NUCLEOTIDE SEQUENCE [LARGE SCALE GENOMIC DNA]</scope>
    <source>
        <strain>YPIII</strain>
    </source>
</reference>
<protein>
    <recommendedName>
        <fullName evidence="1">Flagellar transcriptional regulator FlhD</fullName>
    </recommendedName>
</protein>
<comment type="function">
    <text evidence="1">Functions in complex with FlhC as a master transcriptional regulator that regulates transcription of several flagellar and non-flagellar operons by binding to their promoter region. Activates expression of class 2 flagellar genes, including fliA, which is a flagellum-specific sigma factor that turns on the class 3 genes. Also regulates genes whose products function in a variety of physiological pathways.</text>
</comment>
<comment type="subunit">
    <text evidence="1">Homodimer; disulfide-linked. Forms a heterohexamer composed of two FlhC and four FlhD subunits. Each FlhC binds a FlhD dimer, forming a heterotrimer, and a hexamer assembles by dimerization of two heterotrimers.</text>
</comment>
<comment type="subcellular location">
    <subcellularLocation>
        <location evidence="1">Cytoplasm</location>
    </subcellularLocation>
</comment>
<comment type="domain">
    <text evidence="1">The C-terminal region contains a putative helix-turn-helix (HTH) motif, suggesting that this region may bind DNA.</text>
</comment>
<comment type="similarity">
    <text evidence="1">Belongs to the FlhD family.</text>
</comment>
<dbReference type="EMBL" id="CP000950">
    <property type="protein sequence ID" value="ACA68038.1"/>
    <property type="molecule type" value="Genomic_DNA"/>
</dbReference>
<dbReference type="RefSeq" id="WP_011192574.1">
    <property type="nucleotide sequence ID" value="NZ_CP009792.1"/>
</dbReference>
<dbReference type="SMR" id="B1JI92"/>
<dbReference type="GeneID" id="96665894"/>
<dbReference type="KEGG" id="ypy:YPK_1745"/>
<dbReference type="PATRIC" id="fig|502800.11.peg.2409"/>
<dbReference type="GO" id="GO:0005737">
    <property type="term" value="C:cytoplasm"/>
    <property type="evidence" value="ECO:0007669"/>
    <property type="project" value="UniProtKB-SubCell"/>
</dbReference>
<dbReference type="GO" id="GO:0003677">
    <property type="term" value="F:DNA binding"/>
    <property type="evidence" value="ECO:0007669"/>
    <property type="project" value="UniProtKB-UniRule"/>
</dbReference>
<dbReference type="GO" id="GO:0044780">
    <property type="term" value="P:bacterial-type flagellum assembly"/>
    <property type="evidence" value="ECO:0007669"/>
    <property type="project" value="InterPro"/>
</dbReference>
<dbReference type="GO" id="GO:0045893">
    <property type="term" value="P:positive regulation of DNA-templated transcription"/>
    <property type="evidence" value="ECO:0007669"/>
    <property type="project" value="InterPro"/>
</dbReference>
<dbReference type="GO" id="GO:1902208">
    <property type="term" value="P:regulation of bacterial-type flagellum assembly"/>
    <property type="evidence" value="ECO:0007669"/>
    <property type="project" value="UniProtKB-UniRule"/>
</dbReference>
<dbReference type="Gene3D" id="1.10.4000.10">
    <property type="entry name" value="Flagellar transcriptional activator FlhD"/>
    <property type="match status" value="1"/>
</dbReference>
<dbReference type="HAMAP" id="MF_00725">
    <property type="entry name" value="FlhD"/>
    <property type="match status" value="1"/>
</dbReference>
<dbReference type="InterPro" id="IPR023559">
    <property type="entry name" value="Flagellar_FlhD"/>
</dbReference>
<dbReference type="InterPro" id="IPR036194">
    <property type="entry name" value="FlhD_sf"/>
</dbReference>
<dbReference type="NCBIfam" id="NF002783">
    <property type="entry name" value="PRK02909.1-1"/>
    <property type="match status" value="1"/>
</dbReference>
<dbReference type="Pfam" id="PF05247">
    <property type="entry name" value="FlhD"/>
    <property type="match status" value="1"/>
</dbReference>
<dbReference type="SUPFAM" id="SSF63592">
    <property type="entry name" value="Flagellar transcriptional activator FlhD"/>
    <property type="match status" value="1"/>
</dbReference>
<accession>B1JI92</accession>
<sequence>MSTSELLKHIYDINLSYLLLAQRLINDEKASAMFRLGITDTMADALSQLTLPQMVKLAETNQLVCHFRFSDHNTIHHLTKESRVDDLQQIHTGILLSSHLLHELSLKDDSTPKKRA</sequence>
<feature type="chain" id="PRO_1000132697" description="Flagellar transcriptional regulator FlhD">
    <location>
        <begin position="1"/>
        <end position="116"/>
    </location>
</feature>
<feature type="disulfide bond" description="Interchain" evidence="1">
    <location>
        <position position="65"/>
    </location>
</feature>
<keyword id="KW-0010">Activator</keyword>
<keyword id="KW-1005">Bacterial flagellum biogenesis</keyword>
<keyword id="KW-0963">Cytoplasm</keyword>
<keyword id="KW-1015">Disulfide bond</keyword>
<keyword id="KW-0238">DNA-binding</keyword>
<keyword id="KW-0804">Transcription</keyword>
<keyword id="KW-0805">Transcription regulation</keyword>